<protein>
    <recommendedName>
        <fullName evidence="13">Carboxypeptidase A1</fullName>
        <ecNumber evidence="7 11">3.4.17.1</ecNumber>
    </recommendedName>
</protein>
<comment type="function">
    <text evidence="1 7 11">Carboxypeptidase that catalyzes the release of a C-terminal amino acid, but has little or no action with -Asp, -Glu, -Arg, -Lys or -Pro (PubMed:20385563, PubMed:8806703). Catalyzes the conversion of leukotriene C4 to leukotriene F4 via the hydrolysis of an amide bond (By similarity).</text>
</comment>
<comment type="catalytic activity">
    <reaction evidence="7 11">
        <text>Release of a C-terminal amino acid, but little or no action with -Asp, -Glu, -Arg, -Lys or -Pro.</text>
        <dbReference type="EC" id="3.4.17.1"/>
    </reaction>
</comment>
<comment type="catalytic activity">
    <reaction evidence="1">
        <text>leukotriene C4 + H2O = leukotriene F4 + glycine</text>
        <dbReference type="Rhea" id="RHEA:50740"/>
        <dbReference type="ChEBI" id="CHEBI:15377"/>
        <dbReference type="ChEBI" id="CHEBI:57305"/>
        <dbReference type="ChEBI" id="CHEBI:57973"/>
        <dbReference type="ChEBI" id="CHEBI:133618"/>
    </reaction>
    <physiologicalReaction direction="left-to-right" evidence="1">
        <dbReference type="Rhea" id="RHEA:50741"/>
    </physiologicalReaction>
</comment>
<comment type="cofactor">
    <cofactor evidence="5">
        <name>Zn(2+)</name>
        <dbReference type="ChEBI" id="CHEBI:29105"/>
    </cofactor>
    <text evidence="5">Binds 1 zinc ion per subunit.</text>
</comment>
<comment type="activity regulation">
    <text evidence="9">Inhibited by interaction with the S.magnifica carboxypeptidase inhibitor SmCI.</text>
</comment>
<comment type="biophysicochemical properties">
    <kinetics>
        <KM evidence="7">20.4 uM for 3-(2-furyl)acryloyl-Phe-Phe (at 25 degrees Celsius)</KM>
        <KM evidence="7">166 uM for 3-(2-furyl)acryloyl-Phe-Trp (at 25 degrees Celsius)</KM>
        <KM evidence="7">15.7 uM for 3-(2-furyl)acryloyl-Phe-Leu (at 25 degrees Celsius)</KM>
        <KM evidence="7">9.33 uM for 3-(2-furyl)acryloyl-Phe-Ile (at 25 degrees Celsius)</KM>
        <KM evidence="7">128 uM for 3-(2-furyl)acryloyl-Phe-Met (at 25 degrees Celsius)</KM>
        <KM evidence="7">300 uM for 3-(2-furyl)acryloyl-Phe-Ala (at 25 degrees Celsius)</KM>
        <KM evidence="7">8.95 uM for 3-(2-furyl)acryloyl-Phe-Val (at 25 degrees Celsius)</KM>
        <text evidence="7">kcat is 76.6 sec(-1) with 3-(2-furyl)acryloyl-Phe-Phe as substrate (at 25 degrees Celsius) (PubMed:20385563). kcat is 81.3 sec(-1) with 3-(2-furyl)acryloyl-Phe-Trp as substrate (at 25 degrees Celsius) (PubMed:20385563). kcat is 34 sec(-1) with 3-(2-furyl)acryloyl-Phe-Leu as substrate (at 25 degrees Celsius) (PubMed:20385563). kcat is 9.77 sec(-1) with 3-(2-furyl)acryloyl-Phe-Ile as substrate (at 25 degrees Celsius) (PubMed:20385563). kcat is 51.8 sec(-1) with 3-(2-furyl)acryloyl-Phe-Met as substrate (at 25 degrees Celsius) (PubMed:20385563). kcat is 78 sec(-1) with 3-(2-furyl)acryloyl-Phe-Ala as substrate (at 25 degrees Celsius) (PubMed:20385563). kcat is 12.3 sec(-1) with 3-(2-furyl)acryloyl-Phe-Val as substrate (at 25 degrees Celsius) (PubMed:20385563).</text>
    </kinetics>
</comment>
<comment type="subunit">
    <text evidence="5 6">Monomer. May form a complex with proelastase 2.</text>
</comment>
<comment type="interaction">
    <interactant intactId="EBI-1642148">
        <id>P15085</id>
    </interactant>
    <interactant intactId="EBI-15754788">
        <id>P19399</id>
    </interactant>
    <organismsDiffer>true</organismsDiffer>
    <experiments>2</experiments>
</comment>
<comment type="subcellular location">
    <subcellularLocation>
        <location evidence="2">Secreted</location>
    </subcellularLocation>
</comment>
<comment type="similarity">
    <text evidence="13">Belongs to the peptidase M14 family.</text>
</comment>
<organism>
    <name type="scientific">Homo sapiens</name>
    <name type="common">Human</name>
    <dbReference type="NCBI Taxonomy" id="9606"/>
    <lineage>
        <taxon>Eukaryota</taxon>
        <taxon>Metazoa</taxon>
        <taxon>Chordata</taxon>
        <taxon>Craniata</taxon>
        <taxon>Vertebrata</taxon>
        <taxon>Euteleostomi</taxon>
        <taxon>Mammalia</taxon>
        <taxon>Eutheria</taxon>
        <taxon>Euarchontoglires</taxon>
        <taxon>Primates</taxon>
        <taxon>Haplorrhini</taxon>
        <taxon>Catarrhini</taxon>
        <taxon>Hominidae</taxon>
        <taxon>Homo</taxon>
    </lineage>
</organism>
<dbReference type="EC" id="3.4.17.1" evidence="7 11"/>
<dbReference type="EMBL" id="X67318">
    <property type="protein sequence ID" value="CAA47732.1"/>
    <property type="molecule type" value="mRNA"/>
</dbReference>
<dbReference type="EMBL" id="AK291493">
    <property type="protein sequence ID" value="BAF84182.1"/>
    <property type="molecule type" value="mRNA"/>
</dbReference>
<dbReference type="EMBL" id="BT007313">
    <property type="protein sequence ID" value="AAP35977.1"/>
    <property type="molecule type" value="mRNA"/>
</dbReference>
<dbReference type="EMBL" id="CH236950">
    <property type="protein sequence ID" value="EAL24089.1"/>
    <property type="molecule type" value="Genomic_DNA"/>
</dbReference>
<dbReference type="EMBL" id="CH471070">
    <property type="protein sequence ID" value="EAW83763.1"/>
    <property type="molecule type" value="Genomic_DNA"/>
</dbReference>
<dbReference type="EMBL" id="BC005279">
    <property type="protein sequence ID" value="AAH05279.1"/>
    <property type="molecule type" value="mRNA"/>
</dbReference>
<dbReference type="CCDS" id="CCDS5820.1"/>
<dbReference type="PIR" id="S29127">
    <property type="entry name" value="S29127"/>
</dbReference>
<dbReference type="RefSeq" id="NP_001859.1">
    <property type="nucleotide sequence ID" value="NM_001868.4"/>
</dbReference>
<dbReference type="PDB" id="2V77">
    <property type="method" value="X-ray"/>
    <property type="resolution" value="1.60 A"/>
    <property type="chains" value="A/B=111-419"/>
</dbReference>
<dbReference type="PDB" id="3FJU">
    <property type="method" value="X-ray"/>
    <property type="resolution" value="1.60 A"/>
    <property type="chains" value="A=112-418"/>
</dbReference>
<dbReference type="PDB" id="4UEE">
    <property type="method" value="X-ray"/>
    <property type="resolution" value="2.27 A"/>
    <property type="chains" value="A/B=111-419"/>
</dbReference>
<dbReference type="PDB" id="4UEZ">
    <property type="method" value="X-ray"/>
    <property type="resolution" value="2.29 A"/>
    <property type="chains" value="A/B=111-419"/>
</dbReference>
<dbReference type="PDB" id="5OM9">
    <property type="method" value="X-ray"/>
    <property type="resolution" value="1.80 A"/>
    <property type="chains" value="A/B=1-419"/>
</dbReference>
<dbReference type="PDB" id="6I6Z">
    <property type="method" value="X-ray"/>
    <property type="resolution" value="1.72 A"/>
    <property type="chains" value="A/B=111-418"/>
</dbReference>
<dbReference type="PDBsum" id="2V77"/>
<dbReference type="PDBsum" id="3FJU"/>
<dbReference type="PDBsum" id="4UEE"/>
<dbReference type="PDBsum" id="4UEZ"/>
<dbReference type="PDBsum" id="5OM9"/>
<dbReference type="PDBsum" id="6I6Z"/>
<dbReference type="SMR" id="P15085"/>
<dbReference type="BioGRID" id="107749">
    <property type="interactions" value="2"/>
</dbReference>
<dbReference type="DIP" id="DIP-48699N"/>
<dbReference type="FunCoup" id="P15085">
    <property type="interactions" value="160"/>
</dbReference>
<dbReference type="IntAct" id="P15085">
    <property type="interactions" value="3"/>
</dbReference>
<dbReference type="STRING" id="9606.ENSP00000011292"/>
<dbReference type="BindingDB" id="P15085"/>
<dbReference type="ChEMBL" id="CHEMBL2088"/>
<dbReference type="DrugBank" id="DB06924">
    <property type="generic name" value="(2R)-2-benzyl-3-nitropropanoic acid"/>
</dbReference>
<dbReference type="DrugBank" id="DB07484">
    <property type="generic name" value="(2R)-4,4-dihydroxy-5-nitro-2-(phenylmethyl)pentanoic acid"/>
</dbReference>
<dbReference type="DrugBank" id="DB02494">
    <property type="generic name" value="(S)-3-phenyllactic acid"/>
</dbReference>
<dbReference type="DrugBank" id="DB03441">
    <property type="generic name" value="2-Benzyl-3-Iodopropanoic Acid"/>
</dbReference>
<dbReference type="DrugBank" id="DB04316">
    <property type="generic name" value="D-[(N-Hydroxyamino)Carbonyl]Phenylalanine"/>
</dbReference>
<dbReference type="DrugBank" id="DB03201">
    <property type="generic name" value="D-Cysteine"/>
</dbReference>
<dbReference type="DrugBank" id="DB11095">
    <property type="generic name" value="Desirudin"/>
</dbReference>
<dbReference type="DrugBank" id="DB02652">
    <property type="generic name" value="L-[(N-Hydroxyamino)Carbonyl]Phenylalanine"/>
</dbReference>
<dbReference type="DrugBank" id="DB07506">
    <property type="generic name" value="L-BENZYLSUCCINIC ACID"/>
</dbReference>
<dbReference type="DrugBank" id="DB04058">
    <property type="generic name" value="N-Carbamoylphenylalanine"/>
</dbReference>
<dbReference type="DrugBank" id="DB07351">
    <property type="generic name" value="O-(((1R)-((N-(PHENYL-METHOXY-CARBONYL)-ALANYL)-AMINO)METHYL)HYDROXYPHOSPHINYL)3-L-PHENYLLACTATE"/>
</dbReference>
<dbReference type="DrugBank" id="DB08762">
    <property type="generic name" value="O-(((1R)-((N-PHENYLMETHOXYCARBONYL-L-ALANYL)AMINO)ETHYL)HYDROXYPHOSPHONO)-L-BENZYLACETIC ACID"/>
</dbReference>
<dbReference type="DrugBank" id="DB08368">
    <property type="generic name" value="OCTANE-1,3,5,7-TETRACARBOXYLIC ACID"/>
</dbReference>
<dbReference type="DrugBank" id="DB03012">
    <property type="generic name" value="Phenylalanine-N-Sulfonamide"/>
</dbReference>
<dbReference type="GuidetoPHARMACOLOGY" id="1587"/>
<dbReference type="MEROPS" id="M14.001"/>
<dbReference type="iPTMnet" id="P15085"/>
<dbReference type="PhosphoSitePlus" id="P15085"/>
<dbReference type="BioMuta" id="CPA1"/>
<dbReference type="DMDM" id="399196"/>
<dbReference type="MassIVE" id="P15085"/>
<dbReference type="PaxDb" id="9606-ENSP00000011292"/>
<dbReference type="PeptideAtlas" id="P15085"/>
<dbReference type="ProteomicsDB" id="53103"/>
<dbReference type="Pumba" id="P15085"/>
<dbReference type="Antibodypedia" id="17964">
    <property type="antibodies" value="619 antibodies from 39 providers"/>
</dbReference>
<dbReference type="DNASU" id="1357"/>
<dbReference type="Ensembl" id="ENST00000011292.8">
    <property type="protein sequence ID" value="ENSP00000011292.3"/>
    <property type="gene ID" value="ENSG00000091704.10"/>
</dbReference>
<dbReference type="GeneID" id="1357"/>
<dbReference type="KEGG" id="hsa:1357"/>
<dbReference type="MANE-Select" id="ENST00000011292.8">
    <property type="protein sequence ID" value="ENSP00000011292.3"/>
    <property type="RefSeq nucleotide sequence ID" value="NM_001868.4"/>
    <property type="RefSeq protein sequence ID" value="NP_001859.1"/>
</dbReference>
<dbReference type="UCSC" id="uc003vpx.4">
    <property type="organism name" value="human"/>
</dbReference>
<dbReference type="AGR" id="HGNC:2296"/>
<dbReference type="CTD" id="1357"/>
<dbReference type="DisGeNET" id="1357"/>
<dbReference type="GeneCards" id="CPA1"/>
<dbReference type="GeneReviews" id="CPA1"/>
<dbReference type="HGNC" id="HGNC:2296">
    <property type="gene designation" value="CPA1"/>
</dbReference>
<dbReference type="HPA" id="ENSG00000091704">
    <property type="expression patterns" value="Tissue enriched (pancreas)"/>
</dbReference>
<dbReference type="MalaCards" id="CPA1"/>
<dbReference type="MIM" id="114850">
    <property type="type" value="gene"/>
</dbReference>
<dbReference type="neXtProt" id="NX_P15085"/>
<dbReference type="OpenTargets" id="ENSG00000091704"/>
<dbReference type="Orphanet" id="676">
    <property type="disease" value="Hereditary chronic pancreatitis"/>
</dbReference>
<dbReference type="PharmGKB" id="PA26816"/>
<dbReference type="VEuPathDB" id="HostDB:ENSG00000091704"/>
<dbReference type="eggNOG" id="KOG2650">
    <property type="taxonomic scope" value="Eukaryota"/>
</dbReference>
<dbReference type="GeneTree" id="ENSGT00940000158082"/>
<dbReference type="InParanoid" id="P15085"/>
<dbReference type="OMA" id="MFAFHSQ"/>
<dbReference type="OrthoDB" id="3626597at2759"/>
<dbReference type="PAN-GO" id="P15085">
    <property type="GO annotations" value="3 GO annotations based on evolutionary models"/>
</dbReference>
<dbReference type="PhylomeDB" id="P15085"/>
<dbReference type="TreeFam" id="TF317197"/>
<dbReference type="BRENDA" id="3.4.17.1">
    <property type="organism ID" value="2681"/>
</dbReference>
<dbReference type="PathwayCommons" id="P15085"/>
<dbReference type="Reactome" id="R-HSA-9925561">
    <property type="pathway name" value="Developmental Lineage of Pancreatic Acinar Cells"/>
</dbReference>
<dbReference type="SignaLink" id="P15085"/>
<dbReference type="BioGRID-ORCS" id="1357">
    <property type="hits" value="8 hits in 1143 CRISPR screens"/>
</dbReference>
<dbReference type="ChiTaRS" id="CPA1">
    <property type="organism name" value="human"/>
</dbReference>
<dbReference type="EvolutionaryTrace" id="P15085"/>
<dbReference type="GeneWiki" id="Carboxypeptidase_A1"/>
<dbReference type="GenomeRNAi" id="1357"/>
<dbReference type="Pharos" id="P15085">
    <property type="development level" value="Tchem"/>
</dbReference>
<dbReference type="PRO" id="PR:P15085"/>
<dbReference type="Proteomes" id="UP000005640">
    <property type="component" value="Chromosome 7"/>
</dbReference>
<dbReference type="RNAct" id="P15085">
    <property type="molecule type" value="protein"/>
</dbReference>
<dbReference type="Bgee" id="ENSG00000091704">
    <property type="expression patterns" value="Expressed in body of pancreas and 95 other cell types or tissues"/>
</dbReference>
<dbReference type="ExpressionAtlas" id="P15085">
    <property type="expression patterns" value="baseline and differential"/>
</dbReference>
<dbReference type="GO" id="GO:0005615">
    <property type="term" value="C:extracellular space"/>
    <property type="evidence" value="ECO:0000314"/>
    <property type="project" value="UniProtKB"/>
</dbReference>
<dbReference type="GO" id="GO:0004181">
    <property type="term" value="F:metallocarboxypeptidase activity"/>
    <property type="evidence" value="ECO:0000314"/>
    <property type="project" value="UniProtKB"/>
</dbReference>
<dbReference type="GO" id="GO:0008270">
    <property type="term" value="F:zinc ion binding"/>
    <property type="evidence" value="ECO:0007669"/>
    <property type="project" value="InterPro"/>
</dbReference>
<dbReference type="GO" id="GO:0006691">
    <property type="term" value="P:leukotriene metabolic process"/>
    <property type="evidence" value="ECO:0000250"/>
    <property type="project" value="UniProtKB"/>
</dbReference>
<dbReference type="GO" id="GO:0006508">
    <property type="term" value="P:proteolysis"/>
    <property type="evidence" value="ECO:0000318"/>
    <property type="project" value="GO_Central"/>
</dbReference>
<dbReference type="GO" id="GO:0051603">
    <property type="term" value="P:proteolysis involved in protein catabolic process"/>
    <property type="evidence" value="ECO:0007669"/>
    <property type="project" value="Ensembl"/>
</dbReference>
<dbReference type="GO" id="GO:0046686">
    <property type="term" value="P:response to cadmium ion"/>
    <property type="evidence" value="ECO:0007669"/>
    <property type="project" value="Ensembl"/>
</dbReference>
<dbReference type="CDD" id="cd03870">
    <property type="entry name" value="M14_CPA"/>
    <property type="match status" value="1"/>
</dbReference>
<dbReference type="FunFam" id="3.40.630.10:FF:000132">
    <property type="entry name" value="Carboxypeptidase A1"/>
    <property type="match status" value="1"/>
</dbReference>
<dbReference type="FunFam" id="3.30.70.340:FF:000001">
    <property type="entry name" value="Carboxypeptidase A5"/>
    <property type="match status" value="1"/>
</dbReference>
<dbReference type="Gene3D" id="3.30.70.340">
    <property type="entry name" value="Metallocarboxypeptidase-like"/>
    <property type="match status" value="1"/>
</dbReference>
<dbReference type="Gene3D" id="3.40.630.10">
    <property type="entry name" value="Zn peptidases"/>
    <property type="match status" value="1"/>
</dbReference>
<dbReference type="InterPro" id="IPR034248">
    <property type="entry name" value="CPA_M14_CPD"/>
</dbReference>
<dbReference type="InterPro" id="IPR036990">
    <property type="entry name" value="M14A-like_propep"/>
</dbReference>
<dbReference type="InterPro" id="IPR003146">
    <property type="entry name" value="M14A_act_pep"/>
</dbReference>
<dbReference type="InterPro" id="IPR000834">
    <property type="entry name" value="Peptidase_M14"/>
</dbReference>
<dbReference type="PANTHER" id="PTHR11705:SF94">
    <property type="entry name" value="CARBOXYPEPTIDASE A1"/>
    <property type="match status" value="1"/>
</dbReference>
<dbReference type="PANTHER" id="PTHR11705">
    <property type="entry name" value="PROTEASE FAMILY M14 CARBOXYPEPTIDASE A,B"/>
    <property type="match status" value="1"/>
</dbReference>
<dbReference type="Pfam" id="PF00246">
    <property type="entry name" value="Peptidase_M14"/>
    <property type="match status" value="1"/>
</dbReference>
<dbReference type="Pfam" id="PF02244">
    <property type="entry name" value="Propep_M14"/>
    <property type="match status" value="1"/>
</dbReference>
<dbReference type="PRINTS" id="PR00765">
    <property type="entry name" value="CRBOXYPTASEA"/>
</dbReference>
<dbReference type="SMART" id="SM00631">
    <property type="entry name" value="Zn_pept"/>
    <property type="match status" value="1"/>
</dbReference>
<dbReference type="SUPFAM" id="SSF54897">
    <property type="entry name" value="Protease propeptides/inhibitors"/>
    <property type="match status" value="1"/>
</dbReference>
<dbReference type="SUPFAM" id="SSF53187">
    <property type="entry name" value="Zn-dependent exopeptidases"/>
    <property type="match status" value="1"/>
</dbReference>
<dbReference type="PROSITE" id="PS00132">
    <property type="entry name" value="CARBOXYPEPT_ZN_1"/>
    <property type="match status" value="1"/>
</dbReference>
<dbReference type="PROSITE" id="PS00133">
    <property type="entry name" value="CARBOXYPEPT_ZN_2"/>
    <property type="match status" value="1"/>
</dbReference>
<dbReference type="PROSITE" id="PS52035">
    <property type="entry name" value="PEPTIDASE_M14"/>
    <property type="match status" value="1"/>
</dbReference>
<keyword id="KW-0002">3D-structure</keyword>
<keyword id="KW-0121">Carboxypeptidase</keyword>
<keyword id="KW-0903">Direct protein sequencing</keyword>
<keyword id="KW-1015">Disulfide bond</keyword>
<keyword id="KW-0378">Hydrolase</keyword>
<keyword id="KW-0479">Metal-binding</keyword>
<keyword id="KW-0482">Metalloprotease</keyword>
<keyword id="KW-0645">Protease</keyword>
<keyword id="KW-1267">Proteomics identification</keyword>
<keyword id="KW-1185">Reference proteome</keyword>
<keyword id="KW-0964">Secreted</keyword>
<keyword id="KW-0732">Signal</keyword>
<keyword id="KW-0862">Zinc</keyword>
<keyword id="KW-0865">Zymogen</keyword>
<sequence length="419" mass="47140">MRGLLVLSVLLGAVFGKEDFVGHQVLRISVADEAQVQKVKELEDLEHLQLDFWRGPAHPGSPIDVRVPFPSIQAVKIFLESHGISYETMIEDVQSLLDEEQEQMFAFRSRARSTDTFNYATYHTLEEIYDFLDLLVAENPHLVSKIQIGNTYEGRPIYVLKFSTGGSKRPAIWIDTGIHSREWVTQASGVWFAKKITQDYGQDAAFTAILDTLDIFLEIVTNPDGFAFTHSTNRMWRKTRSHTAGSLCIGVDPNRNWDAGFGLSGASSNPCSETYHGKFANSEVEVKSIVDFVKDHGNIKAFISIHSYSQLLMYPYGYKTEPVPDQDELDQLSKAAVTALASLYGTKFNYGSIIKAIYQASGSTIDWTYSQGIKYSFTFELRDTGRYGFLLPASQIIPTAKETWLALLTIMEHTLNHPY</sequence>
<proteinExistence type="evidence at protein level"/>
<feature type="signal peptide" evidence="8 10">
    <location>
        <begin position="1"/>
        <end position="16"/>
    </location>
</feature>
<feature type="propeptide" id="PRO_0000004345" description="Activation peptide">
    <location>
        <begin position="17"/>
        <end position="110"/>
    </location>
</feature>
<feature type="chain" id="PRO_0000004346" description="Carboxypeptidase A1">
    <location>
        <begin position="111"/>
        <end position="419"/>
    </location>
</feature>
<feature type="domain" description="Peptidase M14" evidence="3">
    <location>
        <begin position="121"/>
        <end position="414"/>
    </location>
</feature>
<feature type="active site" description="Proton donor/acceptor" evidence="3">
    <location>
        <position position="380"/>
    </location>
</feature>
<feature type="binding site" evidence="5 15">
    <location>
        <begin position="179"/>
        <end position="182"/>
    </location>
    <ligand>
        <name>substrate</name>
    </ligand>
</feature>
<feature type="binding site" evidence="3 5 15">
    <location>
        <position position="179"/>
    </location>
    <ligand>
        <name>Zn(2+)</name>
        <dbReference type="ChEBI" id="CHEBI:29105"/>
        <note>catalytic</note>
    </ligand>
</feature>
<feature type="binding site" evidence="3 5 15">
    <location>
        <position position="182"/>
    </location>
    <ligand>
        <name>Zn(2+)</name>
        <dbReference type="ChEBI" id="CHEBI:29105"/>
        <note>catalytic</note>
    </ligand>
</feature>
<feature type="binding site" evidence="5 15">
    <location>
        <position position="237"/>
    </location>
    <ligand>
        <name>substrate</name>
    </ligand>
</feature>
<feature type="binding site" evidence="5 15">
    <location>
        <begin position="254"/>
        <end position="255"/>
    </location>
    <ligand>
        <name>substrate</name>
    </ligand>
</feature>
<feature type="binding site" evidence="3 5 15">
    <location>
        <position position="306"/>
    </location>
    <ligand>
        <name>Zn(2+)</name>
        <dbReference type="ChEBI" id="CHEBI:29105"/>
        <note>catalytic</note>
    </ligand>
</feature>
<feature type="binding site" evidence="5 15">
    <location>
        <begin position="307"/>
        <end position="308"/>
    </location>
    <ligand>
        <name>substrate</name>
    </ligand>
</feature>
<feature type="binding site" evidence="5 15">
    <location>
        <position position="358"/>
    </location>
    <ligand>
        <name>substrate</name>
    </ligand>
</feature>
<feature type="disulfide bond" evidence="5 6">
    <location>
        <begin position="248"/>
        <end position="271"/>
    </location>
</feature>
<feature type="sequence variant" id="VAR_048593" description="In dbSNP:rs34474469.">
    <original>A</original>
    <variation>T</variation>
    <location>
        <position position="208"/>
    </location>
</feature>
<feature type="sequence variant" id="VAR_054311" description="In dbSNP:rs17849959." evidence="4 12">
    <original>H</original>
    <variation>R</variation>
    <location>
        <position position="276"/>
    </location>
</feature>
<feature type="sequence conflict" description="In Ref. 10; AA sequence." evidence="13" ref="10">
    <original>NPH</original>
    <variation>HPG</variation>
    <location>
        <begin position="139"/>
        <end position="141"/>
    </location>
</feature>
<feature type="strand" evidence="18">
    <location>
        <begin position="24"/>
        <end position="28"/>
    </location>
</feature>
<feature type="helix" evidence="18">
    <location>
        <begin position="33"/>
        <end position="43"/>
    </location>
</feature>
<feature type="helix" evidence="18">
    <location>
        <begin position="46"/>
        <end position="48"/>
    </location>
</feature>
<feature type="strand" evidence="18">
    <location>
        <begin position="51"/>
        <end position="54"/>
    </location>
</feature>
<feature type="strand" evidence="18">
    <location>
        <begin position="63"/>
        <end position="67"/>
    </location>
</feature>
<feature type="helix" evidence="18">
    <location>
        <begin position="69"/>
        <end position="71"/>
    </location>
</feature>
<feature type="helix" evidence="18">
    <location>
        <begin position="72"/>
        <end position="81"/>
    </location>
</feature>
<feature type="strand" evidence="18">
    <location>
        <begin position="86"/>
        <end position="91"/>
    </location>
</feature>
<feature type="helix" evidence="18">
    <location>
        <begin position="93"/>
        <end position="104"/>
    </location>
</feature>
<feature type="turn" evidence="16">
    <location>
        <begin position="114"/>
        <end position="116"/>
    </location>
</feature>
<feature type="helix" evidence="16">
    <location>
        <begin position="125"/>
        <end position="138"/>
    </location>
</feature>
<feature type="turn" evidence="16">
    <location>
        <begin position="140"/>
        <end position="142"/>
    </location>
</feature>
<feature type="strand" evidence="16">
    <location>
        <begin position="143"/>
        <end position="150"/>
    </location>
</feature>
<feature type="strand" evidence="16">
    <location>
        <begin position="156"/>
        <end position="162"/>
    </location>
</feature>
<feature type="strand" evidence="17">
    <location>
        <begin position="164"/>
        <end position="168"/>
    </location>
</feature>
<feature type="strand" evidence="16">
    <location>
        <begin position="171"/>
        <end position="176"/>
    </location>
</feature>
<feature type="helix" evidence="16">
    <location>
        <begin position="183"/>
        <end position="199"/>
    </location>
</feature>
<feature type="turn" evidence="16">
    <location>
        <begin position="200"/>
        <end position="202"/>
    </location>
</feature>
<feature type="helix" evidence="16">
    <location>
        <begin position="204"/>
        <end position="212"/>
    </location>
</feature>
<feature type="strand" evidence="16">
    <location>
        <begin position="214"/>
        <end position="219"/>
    </location>
</feature>
<feature type="helix" evidence="16">
    <location>
        <begin position="223"/>
        <end position="231"/>
    </location>
</feature>
<feature type="helix" evidence="16">
    <location>
        <begin position="253"/>
        <end position="255"/>
    </location>
</feature>
<feature type="strand" evidence="16">
    <location>
        <begin position="257"/>
        <end position="260"/>
    </location>
</feature>
<feature type="strand" evidence="16">
    <location>
        <begin position="263"/>
        <end position="268"/>
    </location>
</feature>
<feature type="helix" evidence="16">
    <location>
        <begin position="284"/>
        <end position="296"/>
    </location>
</feature>
<feature type="strand" evidence="16">
    <location>
        <begin position="299"/>
        <end position="306"/>
    </location>
</feature>
<feature type="strand" evidence="16">
    <location>
        <begin position="311"/>
        <end position="315"/>
    </location>
</feature>
<feature type="helix" evidence="16">
    <location>
        <begin position="326"/>
        <end position="341"/>
    </location>
</feature>
<feature type="turn" evidence="16">
    <location>
        <begin position="342"/>
        <end position="344"/>
    </location>
</feature>
<feature type="strand" evidence="16">
    <location>
        <begin position="349"/>
        <end position="352"/>
    </location>
</feature>
<feature type="helix" evidence="16">
    <location>
        <begin position="353"/>
        <end position="356"/>
    </location>
</feature>
<feature type="helix" evidence="16">
    <location>
        <begin position="364"/>
        <end position="370"/>
    </location>
</feature>
<feature type="strand" evidence="16">
    <location>
        <begin position="374"/>
        <end position="380"/>
    </location>
</feature>
<feature type="strand" evidence="16">
    <location>
        <begin position="384"/>
        <end position="387"/>
    </location>
</feature>
<feature type="helix" evidence="16">
    <location>
        <begin position="393"/>
        <end position="395"/>
    </location>
</feature>
<feature type="helix" evidence="16">
    <location>
        <begin position="396"/>
        <end position="416"/>
    </location>
</feature>
<name>CBPA1_HUMAN</name>
<reference key="1">
    <citation type="journal article" date="1992" name="Biochem. J.">
        <title>cDNA cloning and sequence analysis of human pancreatic procarboxypeptidase A1.</title>
        <authorList>
            <person name="Catasus L."/>
            <person name="Villegas V."/>
            <person name="Pascual R."/>
            <person name="Aviles F.X."/>
            <person name="Wicker-Planquart C."/>
            <person name="Puigserver A."/>
        </authorList>
    </citation>
    <scope>NUCLEOTIDE SEQUENCE [MRNA]</scope>
    <source>
        <tissue>Pancreas</tissue>
    </source>
</reference>
<reference key="2">
    <citation type="journal article" date="1996" name="Arch. Biochem. Biophys.">
        <title>Expression and characterization of human pancreatic preprocarboxypeptidase A1 and preprocarboxypeptidase A2.</title>
        <authorList>
            <person name="Laethem R.M."/>
            <person name="Blumenkopf T.A."/>
            <person name="Cory M."/>
            <person name="Elwell L."/>
            <person name="Moxham C.P."/>
            <person name="Ray P.H."/>
            <person name="Walton L.M."/>
            <person name="Smith G.K."/>
        </authorList>
    </citation>
    <scope>NUCLEOTIDE SEQUENCE [MRNA]</scope>
    <scope>FUNCTION</scope>
    <scope>CATALYTIC ACTIVITY</scope>
</reference>
<reference key="3">
    <citation type="journal article" date="2004" name="Nat. Genet.">
        <title>Complete sequencing and characterization of 21,243 full-length human cDNAs.</title>
        <authorList>
            <person name="Ota T."/>
            <person name="Suzuki Y."/>
            <person name="Nishikawa T."/>
            <person name="Otsuki T."/>
            <person name="Sugiyama T."/>
            <person name="Irie R."/>
            <person name="Wakamatsu A."/>
            <person name="Hayashi K."/>
            <person name="Sato H."/>
            <person name="Nagai K."/>
            <person name="Kimura K."/>
            <person name="Makita H."/>
            <person name="Sekine M."/>
            <person name="Obayashi M."/>
            <person name="Nishi T."/>
            <person name="Shibahara T."/>
            <person name="Tanaka T."/>
            <person name="Ishii S."/>
            <person name="Yamamoto J."/>
            <person name="Saito K."/>
            <person name="Kawai Y."/>
            <person name="Isono Y."/>
            <person name="Nakamura Y."/>
            <person name="Nagahari K."/>
            <person name="Murakami K."/>
            <person name="Yasuda T."/>
            <person name="Iwayanagi T."/>
            <person name="Wagatsuma M."/>
            <person name="Shiratori A."/>
            <person name="Sudo H."/>
            <person name="Hosoiri T."/>
            <person name="Kaku Y."/>
            <person name="Kodaira H."/>
            <person name="Kondo H."/>
            <person name="Sugawara M."/>
            <person name="Takahashi M."/>
            <person name="Kanda K."/>
            <person name="Yokoi T."/>
            <person name="Furuya T."/>
            <person name="Kikkawa E."/>
            <person name="Omura Y."/>
            <person name="Abe K."/>
            <person name="Kamihara K."/>
            <person name="Katsuta N."/>
            <person name="Sato K."/>
            <person name="Tanikawa M."/>
            <person name="Yamazaki M."/>
            <person name="Ninomiya K."/>
            <person name="Ishibashi T."/>
            <person name="Yamashita H."/>
            <person name="Murakawa K."/>
            <person name="Fujimori K."/>
            <person name="Tanai H."/>
            <person name="Kimata M."/>
            <person name="Watanabe M."/>
            <person name="Hiraoka S."/>
            <person name="Chiba Y."/>
            <person name="Ishida S."/>
            <person name="Ono Y."/>
            <person name="Takiguchi S."/>
            <person name="Watanabe S."/>
            <person name="Yosida M."/>
            <person name="Hotuta T."/>
            <person name="Kusano J."/>
            <person name="Kanehori K."/>
            <person name="Takahashi-Fujii A."/>
            <person name="Hara H."/>
            <person name="Tanase T.-O."/>
            <person name="Nomura Y."/>
            <person name="Togiya S."/>
            <person name="Komai F."/>
            <person name="Hara R."/>
            <person name="Takeuchi K."/>
            <person name="Arita M."/>
            <person name="Imose N."/>
            <person name="Musashino K."/>
            <person name="Yuuki H."/>
            <person name="Oshima A."/>
            <person name="Sasaki N."/>
            <person name="Aotsuka S."/>
            <person name="Yoshikawa Y."/>
            <person name="Matsunawa H."/>
            <person name="Ichihara T."/>
            <person name="Shiohata N."/>
            <person name="Sano S."/>
            <person name="Moriya S."/>
            <person name="Momiyama H."/>
            <person name="Satoh N."/>
            <person name="Takami S."/>
            <person name="Terashima Y."/>
            <person name="Suzuki O."/>
            <person name="Nakagawa S."/>
            <person name="Senoh A."/>
            <person name="Mizoguchi H."/>
            <person name="Goto Y."/>
            <person name="Shimizu F."/>
            <person name="Wakebe H."/>
            <person name="Hishigaki H."/>
            <person name="Watanabe T."/>
            <person name="Sugiyama A."/>
            <person name="Takemoto M."/>
            <person name="Kawakami B."/>
            <person name="Yamazaki M."/>
            <person name="Watanabe K."/>
            <person name="Kumagai A."/>
            <person name="Itakura S."/>
            <person name="Fukuzumi Y."/>
            <person name="Fujimori Y."/>
            <person name="Komiyama M."/>
            <person name="Tashiro H."/>
            <person name="Tanigami A."/>
            <person name="Fujiwara T."/>
            <person name="Ono T."/>
            <person name="Yamada K."/>
            <person name="Fujii Y."/>
            <person name="Ozaki K."/>
            <person name="Hirao M."/>
            <person name="Ohmori Y."/>
            <person name="Kawabata A."/>
            <person name="Hikiji T."/>
            <person name="Kobatake N."/>
            <person name="Inagaki H."/>
            <person name="Ikema Y."/>
            <person name="Okamoto S."/>
            <person name="Okitani R."/>
            <person name="Kawakami T."/>
            <person name="Noguchi S."/>
            <person name="Itoh T."/>
            <person name="Shigeta K."/>
            <person name="Senba T."/>
            <person name="Matsumura K."/>
            <person name="Nakajima Y."/>
            <person name="Mizuno T."/>
            <person name="Morinaga M."/>
            <person name="Sasaki M."/>
            <person name="Togashi T."/>
            <person name="Oyama M."/>
            <person name="Hata H."/>
            <person name="Watanabe M."/>
            <person name="Komatsu T."/>
            <person name="Mizushima-Sugano J."/>
            <person name="Satoh T."/>
            <person name="Shirai Y."/>
            <person name="Takahashi Y."/>
            <person name="Nakagawa K."/>
            <person name="Okumura K."/>
            <person name="Nagase T."/>
            <person name="Nomura N."/>
            <person name="Kikuchi H."/>
            <person name="Masuho Y."/>
            <person name="Yamashita R."/>
            <person name="Nakai K."/>
            <person name="Yada T."/>
            <person name="Nakamura Y."/>
            <person name="Ohara O."/>
            <person name="Isogai T."/>
            <person name="Sugano S."/>
        </authorList>
    </citation>
    <scope>NUCLEOTIDE SEQUENCE [LARGE SCALE MRNA]</scope>
    <source>
        <tissue>Pancreas</tissue>
    </source>
</reference>
<reference key="4">
    <citation type="submission" date="2003-05" db="EMBL/GenBank/DDBJ databases">
        <title>Cloning of human full-length CDSs in BD Creator(TM) system donor vector.</title>
        <authorList>
            <person name="Kalnine N."/>
            <person name="Chen X."/>
            <person name="Rolfs A."/>
            <person name="Halleck A."/>
            <person name="Hines L."/>
            <person name="Eisenstein S."/>
            <person name="Koundinya M."/>
            <person name="Raphael J."/>
            <person name="Moreira D."/>
            <person name="Kelley T."/>
            <person name="LaBaer J."/>
            <person name="Lin Y."/>
            <person name="Phelan M."/>
            <person name="Farmer A."/>
        </authorList>
    </citation>
    <scope>NUCLEOTIDE SEQUENCE [LARGE SCALE MRNA]</scope>
    <scope>VARIANT ARG-276</scope>
</reference>
<reference key="5">
    <citation type="journal article" date="2003" name="Science">
        <title>Human chromosome 7: DNA sequence and biology.</title>
        <authorList>
            <person name="Scherer S.W."/>
            <person name="Cheung J."/>
            <person name="MacDonald J.R."/>
            <person name="Osborne L.R."/>
            <person name="Nakabayashi K."/>
            <person name="Herbrick J.-A."/>
            <person name="Carson A.R."/>
            <person name="Parker-Katiraee L."/>
            <person name="Skaug J."/>
            <person name="Khaja R."/>
            <person name="Zhang J."/>
            <person name="Hudek A.K."/>
            <person name="Li M."/>
            <person name="Haddad M."/>
            <person name="Duggan G.E."/>
            <person name="Fernandez B.A."/>
            <person name="Kanematsu E."/>
            <person name="Gentles S."/>
            <person name="Christopoulos C.C."/>
            <person name="Choufani S."/>
            <person name="Kwasnicka D."/>
            <person name="Zheng X.H."/>
            <person name="Lai Z."/>
            <person name="Nusskern D.R."/>
            <person name="Zhang Q."/>
            <person name="Gu Z."/>
            <person name="Lu F."/>
            <person name="Zeesman S."/>
            <person name="Nowaczyk M.J."/>
            <person name="Teshima I."/>
            <person name="Chitayat D."/>
            <person name="Shuman C."/>
            <person name="Weksberg R."/>
            <person name="Zackai E.H."/>
            <person name="Grebe T.A."/>
            <person name="Cox S.R."/>
            <person name="Kirkpatrick S.J."/>
            <person name="Rahman N."/>
            <person name="Friedman J.M."/>
            <person name="Heng H.H.Q."/>
            <person name="Pelicci P.G."/>
            <person name="Lo-Coco F."/>
            <person name="Belloni E."/>
            <person name="Shaffer L.G."/>
            <person name="Pober B."/>
            <person name="Morton C.C."/>
            <person name="Gusella J.F."/>
            <person name="Bruns G.A.P."/>
            <person name="Korf B.R."/>
            <person name="Quade B.J."/>
            <person name="Ligon A.H."/>
            <person name="Ferguson H."/>
            <person name="Higgins A.W."/>
            <person name="Leach N.T."/>
            <person name="Herrick S.R."/>
            <person name="Lemyre E."/>
            <person name="Farra C.G."/>
            <person name="Kim H.-G."/>
            <person name="Summers A.M."/>
            <person name="Gripp K.W."/>
            <person name="Roberts W."/>
            <person name="Szatmari P."/>
            <person name="Winsor E.J.T."/>
            <person name="Grzeschik K.-H."/>
            <person name="Teebi A."/>
            <person name="Minassian B.A."/>
            <person name="Kere J."/>
            <person name="Armengol L."/>
            <person name="Pujana M.A."/>
            <person name="Estivill X."/>
            <person name="Wilson M.D."/>
            <person name="Koop B.F."/>
            <person name="Tosi S."/>
            <person name="Moore G.E."/>
            <person name="Boright A.P."/>
            <person name="Zlotorynski E."/>
            <person name="Kerem B."/>
            <person name="Kroisel P.M."/>
            <person name="Petek E."/>
            <person name="Oscier D.G."/>
            <person name="Mould S.J."/>
            <person name="Doehner H."/>
            <person name="Doehner K."/>
            <person name="Rommens J.M."/>
            <person name="Vincent J.B."/>
            <person name="Venter J.C."/>
            <person name="Li P.W."/>
            <person name="Mural R.J."/>
            <person name="Adams M.D."/>
            <person name="Tsui L.-C."/>
        </authorList>
    </citation>
    <scope>NUCLEOTIDE SEQUENCE [LARGE SCALE GENOMIC DNA]</scope>
</reference>
<reference key="6">
    <citation type="submission" date="2005-07" db="EMBL/GenBank/DDBJ databases">
        <authorList>
            <person name="Mural R.J."/>
            <person name="Istrail S."/>
            <person name="Sutton G.G."/>
            <person name="Florea L."/>
            <person name="Halpern A.L."/>
            <person name="Mobarry C.M."/>
            <person name="Lippert R."/>
            <person name="Walenz B."/>
            <person name="Shatkay H."/>
            <person name="Dew I."/>
            <person name="Miller J.R."/>
            <person name="Flanigan M.J."/>
            <person name="Edwards N.J."/>
            <person name="Bolanos R."/>
            <person name="Fasulo D."/>
            <person name="Halldorsson B.V."/>
            <person name="Hannenhalli S."/>
            <person name="Turner R."/>
            <person name="Yooseph S."/>
            <person name="Lu F."/>
            <person name="Nusskern D.R."/>
            <person name="Shue B.C."/>
            <person name="Zheng X.H."/>
            <person name="Zhong F."/>
            <person name="Delcher A.L."/>
            <person name="Huson D.H."/>
            <person name="Kravitz S.A."/>
            <person name="Mouchard L."/>
            <person name="Reinert K."/>
            <person name="Remington K.A."/>
            <person name="Clark A.G."/>
            <person name="Waterman M.S."/>
            <person name="Eichler E.E."/>
            <person name="Adams M.D."/>
            <person name="Hunkapiller M.W."/>
            <person name="Myers E.W."/>
            <person name="Venter J.C."/>
        </authorList>
    </citation>
    <scope>NUCLEOTIDE SEQUENCE [LARGE SCALE GENOMIC DNA]</scope>
</reference>
<reference key="7">
    <citation type="journal article" date="2004" name="Genome Res.">
        <title>The status, quality, and expansion of the NIH full-length cDNA project: the Mammalian Gene Collection (MGC).</title>
        <authorList>
            <consortium name="The MGC Project Team"/>
        </authorList>
    </citation>
    <scope>NUCLEOTIDE SEQUENCE [LARGE SCALE MRNA]</scope>
    <scope>VARIANT ARG-276</scope>
    <source>
        <tissue>Pancreas</tissue>
    </source>
</reference>
<reference key="8">
    <citation type="journal article" date="1990" name="FEBS Lett.">
        <title>Further studies on the human pancreatic binary complexes involving procarboxypeptidase A.</title>
        <authorList>
            <person name="Moulard M."/>
            <person name="Michon T."/>
            <person name="Kerfelec B."/>
            <person name="Chapus C."/>
        </authorList>
    </citation>
    <scope>PROTEIN SEQUENCE OF 17-43 AND 114-135</scope>
    <scope>INTERACTION WITH PROELASTASE 2</scope>
</reference>
<reference key="9">
    <citation type="journal article" date="1989" name="Eur. J. Biochem.">
        <title>Purification and properties of five different forms of human procarboxypeptidases.</title>
        <authorList>
            <person name="Pascual R."/>
            <person name="Burgos F.J."/>
            <person name="Salva M."/>
            <person name="Soriano F."/>
            <person name="Mendez E."/>
            <person name="Aviles F.X."/>
        </authorList>
    </citation>
    <scope>PROTEIN SEQUENCE OF 17-42</scope>
</reference>
<reference key="10">
    <citation type="journal article" date="1993" name="Biomed. Chromatogr.">
        <title>Separation of human pancreatic carboxypeptidase A isoenzymes by high performance liquid chromatography.</title>
        <authorList>
            <person name="Linder D."/>
            <person name="Linder M."/>
            <person name="Schade H."/>
            <person name="Sziegoleit A."/>
        </authorList>
    </citation>
    <scope>PROTEIN SEQUENCE OF 113-143</scope>
    <source>
        <tissue>Pancreas</tissue>
    </source>
</reference>
<reference key="11">
    <citation type="journal article" date="1990" name="Am. J. Hum. Genet.">
        <title>Human carboxypeptidase A identifies a BglII RFLP and maps to 7q31-qter.</title>
        <authorList>
            <person name="Stewart E.A."/>
            <person name="Craik C.S."/>
            <person name="Hake L."/>
            <person name="Bowcock A.M."/>
        </authorList>
    </citation>
    <scope>NUCLEOTIDE SEQUENCE [MRNA] OF 330-396</scope>
</reference>
<reference key="12">
    <citation type="journal article" date="2013" name="Structure">
        <title>A noncanonical mechanism of carboxypeptidase inhibition revealed by the crystal structure of the Tri-Kunitz SmCI in complex with human CPA4.</title>
        <authorList>
            <person name="Alonso del Rivero M."/>
            <person name="Reytor M.L."/>
            <person name="Trejo S.A."/>
            <person name="Chavez M.A."/>
            <person name="Aviles F.X."/>
            <person name="Reverter D."/>
        </authorList>
    </citation>
    <scope>ACTIVITY REGULATION</scope>
</reference>
<reference key="13">
    <citation type="journal article" date="2010" name="J. Biol. Chem.">
        <title>Characterization of the substrate specificity of human carboxypeptidase A4 and implications for a role in extracellular peptide processing.</title>
        <authorList>
            <person name="Tanco S."/>
            <person name="Zhang X."/>
            <person name="Morano C."/>
            <person name="Aviles F.X."/>
            <person name="Lorenzo J."/>
            <person name="Fricker L.D."/>
        </authorList>
    </citation>
    <scope>FUNCTION</scope>
    <scope>CATALYTIC ACTIVITY</scope>
    <scope>BIOPHYSICOCHEMICAL PROPERTIES</scope>
</reference>
<reference key="14">
    <citation type="journal article" date="2008" name="Acta Crystallogr. D">
        <title>Direct interaction between a human digestive protease and the mucoadhesive poly(acrylic acid).</title>
        <authorList>
            <person name="Pallares I."/>
            <person name="Fernandez D."/>
            <person name="Comellas-Bigler M."/>
            <person name="Fernandez-Recio J."/>
            <person name="Ventura S."/>
            <person name="Aviles F.X."/>
            <person name="Bode W."/>
            <person name="Vendrell J."/>
        </authorList>
    </citation>
    <scope>X-RAY CRYSTALLOGRAPHY (1.6 ANGSTROMS) OF 111-419 IN COMPLEX WITH POLYACRYLIC ACID AND ZINC IONS</scope>
    <scope>SUBUNIT</scope>
    <scope>DISULFIDE BOND</scope>
</reference>
<reference key="15">
    <citation type="journal article" date="2009" name="Proc. Natl. Acad. Sci. U.S.A.">
        <title>Mammalian metallopeptidase inhibition at the defense barrier of Ascaris parasite.</title>
        <authorList>
            <person name="Sanglas L."/>
            <person name="Aviles F.X."/>
            <person name="Huber R."/>
            <person name="Gomis-Rueth F.X."/>
            <person name="Arolas J.L."/>
        </authorList>
    </citation>
    <scope>X-RAY CRYSTALLOGRAPHY (1.6 ANGSTROMS) OF 112-418 IN COMPLEX WITH ASCARIS CARBOXYPEPTIDASE INHIBITOR AND ZINC IONS</scope>
    <scope>SUBUNIT</scope>
    <scope>DISULFIDE BOND</scope>
</reference>
<evidence type="ECO:0000250" key="1">
    <source>
        <dbReference type="UniProtKB" id="P00730"/>
    </source>
</evidence>
<evidence type="ECO:0000250" key="2">
    <source>
        <dbReference type="UniProtKB" id="Q9UI42"/>
    </source>
</evidence>
<evidence type="ECO:0000255" key="3">
    <source>
        <dbReference type="PROSITE-ProRule" id="PRU01379"/>
    </source>
</evidence>
<evidence type="ECO:0000269" key="4">
    <source>
    </source>
</evidence>
<evidence type="ECO:0000269" key="5">
    <source>
    </source>
</evidence>
<evidence type="ECO:0000269" key="6">
    <source>
    </source>
</evidence>
<evidence type="ECO:0000269" key="7">
    <source>
    </source>
</evidence>
<evidence type="ECO:0000269" key="8">
    <source>
    </source>
</evidence>
<evidence type="ECO:0000269" key="9">
    <source>
    </source>
</evidence>
<evidence type="ECO:0000269" key="10">
    <source>
    </source>
</evidence>
<evidence type="ECO:0000269" key="11">
    <source>
    </source>
</evidence>
<evidence type="ECO:0000269" key="12">
    <source ref="4"/>
</evidence>
<evidence type="ECO:0000305" key="13"/>
<evidence type="ECO:0000312" key="14">
    <source>
        <dbReference type="HGNC" id="HGNC:2296"/>
    </source>
</evidence>
<evidence type="ECO:0007744" key="15">
    <source>
        <dbReference type="PDB" id="2V77"/>
    </source>
</evidence>
<evidence type="ECO:0007829" key="16">
    <source>
        <dbReference type="PDB" id="3FJU"/>
    </source>
</evidence>
<evidence type="ECO:0007829" key="17">
    <source>
        <dbReference type="PDB" id="4UEE"/>
    </source>
</evidence>
<evidence type="ECO:0007829" key="18">
    <source>
        <dbReference type="PDB" id="5OM9"/>
    </source>
</evidence>
<gene>
    <name evidence="14" type="primary">CPA1</name>
    <name type="synonym">CPA</name>
</gene>
<accession>P15085</accession>
<accession>A4D1M1</accession>
<accession>Q53XU0</accession>
<accession>Q9BS67</accession>
<accession>Q9UCF2</accession>